<organism>
    <name type="scientific">Aeropyrum pernix (strain ATCC 700893 / DSM 11879 / JCM 9820 / NBRC 100138 / K1)</name>
    <dbReference type="NCBI Taxonomy" id="272557"/>
    <lineage>
        <taxon>Archaea</taxon>
        <taxon>Thermoproteota</taxon>
        <taxon>Thermoprotei</taxon>
        <taxon>Desulfurococcales</taxon>
        <taxon>Desulfurococcaceae</taxon>
        <taxon>Aeropyrum</taxon>
    </lineage>
</organism>
<accession>P58289</accession>
<accession>Q05E31</accession>
<protein>
    <recommendedName>
        <fullName evidence="1">Large ribosomal subunit protein eL20</fullName>
    </recommendedName>
    <alternativeName>
        <fullName evidence="2">50S ribosomal protein L18Ae</fullName>
    </alternativeName>
    <alternativeName>
        <fullName evidence="1">50S ribosomal protein L20e</fullName>
    </alternativeName>
    <alternativeName>
        <fullName evidence="1">50S ribosomal protein LX</fullName>
    </alternativeName>
</protein>
<dbReference type="EMBL" id="BA000002">
    <property type="protein sequence ID" value="BAF34770.1"/>
    <property type="molecule type" value="Genomic_DNA"/>
</dbReference>
<dbReference type="RefSeq" id="WP_010866162.1">
    <property type="nucleotide sequence ID" value="NC_000854.2"/>
</dbReference>
<dbReference type="SMR" id="P58289"/>
<dbReference type="STRING" id="272557.APE_1084a"/>
<dbReference type="EnsemblBacteria" id="BAF34770">
    <property type="protein sequence ID" value="BAF34770"/>
    <property type="gene ID" value="APE_1084a"/>
</dbReference>
<dbReference type="GeneID" id="1445555"/>
<dbReference type="KEGG" id="ape:APE_1084a"/>
<dbReference type="eggNOG" id="arCOG04175">
    <property type="taxonomic scope" value="Archaea"/>
</dbReference>
<dbReference type="Proteomes" id="UP000002518">
    <property type="component" value="Chromosome"/>
</dbReference>
<dbReference type="GO" id="GO:1990904">
    <property type="term" value="C:ribonucleoprotein complex"/>
    <property type="evidence" value="ECO:0007669"/>
    <property type="project" value="UniProtKB-KW"/>
</dbReference>
<dbReference type="GO" id="GO:0005840">
    <property type="term" value="C:ribosome"/>
    <property type="evidence" value="ECO:0007669"/>
    <property type="project" value="UniProtKB-KW"/>
</dbReference>
<dbReference type="GO" id="GO:0070180">
    <property type="term" value="F:large ribosomal subunit rRNA binding"/>
    <property type="evidence" value="ECO:0007669"/>
    <property type="project" value="UniProtKB-UniRule"/>
</dbReference>
<dbReference type="GO" id="GO:0003735">
    <property type="term" value="F:structural constituent of ribosome"/>
    <property type="evidence" value="ECO:0007669"/>
    <property type="project" value="InterPro"/>
</dbReference>
<dbReference type="GO" id="GO:0006412">
    <property type="term" value="P:translation"/>
    <property type="evidence" value="ECO:0007669"/>
    <property type="project" value="UniProtKB-UniRule"/>
</dbReference>
<dbReference type="Gene3D" id="3.10.20.10">
    <property type="match status" value="1"/>
</dbReference>
<dbReference type="HAMAP" id="MF_00273">
    <property type="entry name" value="Ribosomal_eL20"/>
    <property type="match status" value="1"/>
</dbReference>
<dbReference type="InterPro" id="IPR028877">
    <property type="entry name" value="Ribosomal_eL20"/>
</dbReference>
<dbReference type="InterPro" id="IPR023573">
    <property type="entry name" value="Ribosomal_eL20_dom"/>
</dbReference>
<dbReference type="NCBIfam" id="NF001981">
    <property type="entry name" value="PRK00773.1-1"/>
    <property type="match status" value="1"/>
</dbReference>
<dbReference type="Pfam" id="PF01775">
    <property type="entry name" value="Ribosomal_L18A"/>
    <property type="match status" value="1"/>
</dbReference>
<dbReference type="SUPFAM" id="SSF160374">
    <property type="entry name" value="RplX-like"/>
    <property type="match status" value="1"/>
</dbReference>
<gene>
    <name evidence="1" type="primary">rpl18a</name>
    <name evidence="1" type="synonym">rpl20e</name>
    <name evidence="1" type="synonym">rplX</name>
    <name type="ordered locus">APE_1084a</name>
</gene>
<evidence type="ECO:0000255" key="1">
    <source>
        <dbReference type="HAMAP-Rule" id="MF_00273"/>
    </source>
</evidence>
<evidence type="ECO:0000305" key="2"/>
<feature type="chain" id="PRO_0000153694" description="Large ribosomal subunit protein eL20">
    <location>
        <begin position="1"/>
        <end position="88"/>
    </location>
</feature>
<reference key="1">
    <citation type="journal article" date="1999" name="DNA Res.">
        <title>Complete genome sequence of an aerobic hyper-thermophilic crenarchaeon, Aeropyrum pernix K1.</title>
        <authorList>
            <person name="Kawarabayasi Y."/>
            <person name="Hino Y."/>
            <person name="Horikawa H."/>
            <person name="Yamazaki S."/>
            <person name="Haikawa Y."/>
            <person name="Jin-no K."/>
            <person name="Takahashi M."/>
            <person name="Sekine M."/>
            <person name="Baba S."/>
            <person name="Ankai A."/>
            <person name="Kosugi H."/>
            <person name="Hosoyama A."/>
            <person name="Fukui S."/>
            <person name="Nagai Y."/>
            <person name="Nishijima K."/>
            <person name="Nakazawa H."/>
            <person name="Takamiya M."/>
            <person name="Masuda S."/>
            <person name="Funahashi T."/>
            <person name="Tanaka T."/>
            <person name="Kudoh Y."/>
            <person name="Yamazaki J."/>
            <person name="Kushida N."/>
            <person name="Oguchi A."/>
            <person name="Aoki K."/>
            <person name="Kubota K."/>
            <person name="Nakamura Y."/>
            <person name="Nomura N."/>
            <person name="Sako Y."/>
            <person name="Kikuchi H."/>
        </authorList>
    </citation>
    <scope>NUCLEOTIDE SEQUENCE [LARGE SCALE GENOMIC DNA]</scope>
    <source>
        <strain>ATCC 700893 / DSM 11879 / JCM 9820 / NBRC 100138 / K1</strain>
    </source>
</reference>
<keyword id="KW-1185">Reference proteome</keyword>
<keyword id="KW-0687">Ribonucleoprotein</keyword>
<keyword id="KW-0689">Ribosomal protein</keyword>
<keyword id="KW-0694">RNA-binding</keyword>
<keyword id="KW-0699">rRNA-binding</keyword>
<proteinExistence type="inferred from homology"/>
<name>RL18A_AERPE</name>
<sequence length="88" mass="10578">MSEVKVYRVKGEMLISHDRYPEWRKFEVYVRALKREHALEKVYSDLGSRHKLRRKHIRIRSVEEVDPGEVEDLNIIRLASLERFVKTG</sequence>
<comment type="subunit">
    <text evidence="1">Part of the 50S ribosomal subunit. Binds 23S rRNA.</text>
</comment>
<comment type="similarity">
    <text evidence="1">Belongs to the eukaryotic ribosomal protein eL20 family.</text>
</comment>